<evidence type="ECO:0000250" key="1">
    <source>
        <dbReference type="UniProtKB" id="B8YB55"/>
    </source>
</evidence>
<evidence type="ECO:0000269" key="2">
    <source>
    </source>
</evidence>
<evidence type="ECO:0000269" key="3">
    <source>
    </source>
</evidence>
<evidence type="ECO:0000269" key="4">
    <source ref="4"/>
</evidence>
<evidence type="ECO:0000303" key="5">
    <source>
    </source>
</evidence>
<evidence type="ECO:0000303" key="6">
    <source>
    </source>
</evidence>
<evidence type="ECO:0000305" key="7"/>
<evidence type="ECO:0000305" key="8">
    <source>
    </source>
</evidence>
<evidence type="ECO:0000305" key="9">
    <source ref="4"/>
</evidence>
<evidence type="ECO:0000312" key="10">
    <source>
        <dbReference type="PDB" id="7OK0"/>
    </source>
</evidence>
<evidence type="ECO:0000312" key="11">
    <source>
        <dbReference type="PDB" id="7OQ4"/>
    </source>
</evidence>
<evidence type="ECO:0000312" key="12">
    <source>
        <dbReference type="PDB" id="7OQY"/>
    </source>
</evidence>
<evidence type="ECO:0007829" key="13">
    <source>
        <dbReference type="PDB" id="7OK0"/>
    </source>
</evidence>
<evidence type="ECO:0007829" key="14">
    <source>
        <dbReference type="PDB" id="7OQ4"/>
    </source>
</evidence>
<evidence type="ECO:0007829" key="15">
    <source>
        <dbReference type="PDB" id="7OQY"/>
    </source>
</evidence>
<protein>
    <recommendedName>
        <fullName evidence="7">DNA-directed RNA polymerase subunit Rpo2</fullName>
        <ecNumber evidence="4">2.7.7.6</ecNumber>
    </recommendedName>
    <alternativeName>
        <fullName evidence="6">DNA-directed RNA polymerase subunit B</fullName>
    </alternativeName>
</protein>
<proteinExistence type="evidence at protein level"/>
<gene>
    <name evidence="7" type="primary">rpo2</name>
    <name evidence="5" type="synonym">rpoB</name>
    <name evidence="6" type="synonym">rpoB'</name>
    <name type="ordered locus">Saci_0693</name>
</gene>
<organism>
    <name type="scientific">Sulfolobus acidocaldarius (strain ATCC 33909 / DSM 639 / JCM 8929 / NBRC 15157 / NCIMB 11770)</name>
    <dbReference type="NCBI Taxonomy" id="330779"/>
    <lineage>
        <taxon>Archaea</taxon>
        <taxon>Thermoproteota</taxon>
        <taxon>Thermoprotei</taxon>
        <taxon>Sulfolobales</taxon>
        <taxon>Sulfolobaceae</taxon>
        <taxon>Sulfolobus</taxon>
    </lineage>
</organism>
<feature type="chain" id="PRO_0000048097" description="DNA-directed RNA polymerase subunit Rpo2">
    <location>
        <begin position="1"/>
        <end position="1126"/>
    </location>
</feature>
<feature type="binding site" evidence="3 10 11 12">
    <location>
        <position position="1060"/>
    </location>
    <ligand>
        <name>Zn(2+)</name>
        <dbReference type="ChEBI" id="CHEBI:29105"/>
    </ligand>
</feature>
<feature type="binding site" evidence="3 10 11 12">
    <location>
        <position position="1063"/>
    </location>
    <ligand>
        <name>Zn(2+)</name>
        <dbReference type="ChEBI" id="CHEBI:29105"/>
    </ligand>
</feature>
<feature type="binding site" evidence="3 10 11 12">
    <location>
        <position position="1078"/>
    </location>
    <ligand>
        <name>Zn(2+)</name>
        <dbReference type="ChEBI" id="CHEBI:29105"/>
    </ligand>
</feature>
<feature type="binding site" evidence="3 10 11 12">
    <location>
        <position position="1081"/>
    </location>
    <ligand>
        <name>Zn(2+)</name>
        <dbReference type="ChEBI" id="CHEBI:29105"/>
    </ligand>
</feature>
<feature type="sequence conflict" description="In Ref. 1; CAA32924." evidence="7" ref="1">
    <original>V</original>
    <variation>M</variation>
    <location>
        <position position="158"/>
    </location>
</feature>
<feature type="sequence conflict" description="In Ref. 1; CAA32924." evidence="7" ref="1">
    <original>D</original>
    <variation>Y</variation>
    <location>
        <position position="1053"/>
    </location>
</feature>
<feature type="helix" evidence="15">
    <location>
        <begin position="4"/>
        <end position="17"/>
    </location>
</feature>
<feature type="helix" evidence="15">
    <location>
        <begin position="22"/>
        <end position="43"/>
    </location>
</feature>
<feature type="strand" evidence="15">
    <location>
        <begin position="45"/>
        <end position="47"/>
    </location>
</feature>
<feature type="strand" evidence="14">
    <location>
        <begin position="49"/>
        <end position="52"/>
    </location>
</feature>
<feature type="strand" evidence="15">
    <location>
        <begin position="53"/>
        <end position="62"/>
    </location>
</feature>
<feature type="strand" evidence="15">
    <location>
        <begin position="64"/>
        <end position="67"/>
    </location>
</feature>
<feature type="strand" evidence="15">
    <location>
        <begin position="69"/>
        <end position="71"/>
    </location>
</feature>
<feature type="helix" evidence="15">
    <location>
        <begin position="80"/>
        <end position="86"/>
    </location>
</feature>
<feature type="strand" evidence="15">
    <location>
        <begin position="91"/>
        <end position="104"/>
    </location>
</feature>
<feature type="strand" evidence="15">
    <location>
        <begin position="110"/>
        <end position="118"/>
    </location>
</feature>
<feature type="strand" evidence="14">
    <location>
        <begin position="123"/>
        <end position="126"/>
    </location>
</feature>
<feature type="helix" evidence="15">
    <location>
        <begin position="127"/>
        <end position="129"/>
    </location>
</feature>
<feature type="helix" evidence="15">
    <location>
        <begin position="133"/>
        <end position="138"/>
    </location>
</feature>
<feature type="strand" evidence="15">
    <location>
        <begin position="150"/>
        <end position="152"/>
    </location>
</feature>
<feature type="strand" evidence="15">
    <location>
        <begin position="155"/>
        <end position="159"/>
    </location>
</feature>
<feature type="strand" evidence="15">
    <location>
        <begin position="161"/>
        <end position="165"/>
    </location>
</feature>
<feature type="strand" evidence="15">
    <location>
        <begin position="167"/>
        <end position="169"/>
    </location>
</feature>
<feature type="strand" evidence="15">
    <location>
        <begin position="171"/>
        <end position="174"/>
    </location>
</feature>
<feature type="strand" evidence="15">
    <location>
        <begin position="179"/>
        <end position="190"/>
    </location>
</feature>
<feature type="strand" evidence="15">
    <location>
        <begin position="195"/>
        <end position="203"/>
    </location>
</feature>
<feature type="strand" evidence="14">
    <location>
        <begin position="204"/>
        <end position="206"/>
    </location>
</feature>
<feature type="strand" evidence="15">
    <location>
        <begin position="208"/>
        <end position="212"/>
    </location>
</feature>
<feature type="helix" evidence="15">
    <location>
        <begin position="221"/>
        <end position="226"/>
    </location>
</feature>
<feature type="turn" evidence="15">
    <location>
        <begin position="227"/>
        <end position="229"/>
    </location>
</feature>
<feature type="helix" evidence="15">
    <location>
        <begin position="233"/>
        <end position="240"/>
    </location>
</feature>
<feature type="helix" evidence="15">
    <location>
        <begin position="244"/>
        <end position="247"/>
    </location>
</feature>
<feature type="helix" evidence="15">
    <location>
        <begin position="248"/>
        <end position="250"/>
    </location>
</feature>
<feature type="helix" evidence="15">
    <location>
        <begin position="251"/>
        <end position="256"/>
    </location>
</feature>
<feature type="helix" evidence="15">
    <location>
        <begin position="263"/>
        <end position="274"/>
    </location>
</feature>
<feature type="helix" evidence="15">
    <location>
        <begin position="282"/>
        <end position="291"/>
    </location>
</feature>
<feature type="helix" evidence="15">
    <location>
        <begin position="297"/>
        <end position="299"/>
    </location>
</feature>
<feature type="helix" evidence="15">
    <location>
        <begin position="303"/>
        <end position="305"/>
    </location>
</feature>
<feature type="helix" evidence="15">
    <location>
        <begin position="306"/>
        <end position="324"/>
    </location>
</feature>
<feature type="strand" evidence="13">
    <location>
        <begin position="333"/>
        <end position="335"/>
    </location>
</feature>
<feature type="helix" evidence="15">
    <location>
        <begin position="336"/>
        <end position="338"/>
    </location>
</feature>
<feature type="strand" evidence="15">
    <location>
        <begin position="339"/>
        <end position="342"/>
    </location>
</feature>
<feature type="helix" evidence="15">
    <location>
        <begin position="344"/>
        <end position="368"/>
    </location>
</feature>
<feature type="turn" evidence="15">
    <location>
        <begin position="370"/>
        <end position="372"/>
    </location>
</feature>
<feature type="helix" evidence="15">
    <location>
        <begin position="379"/>
        <end position="382"/>
    </location>
</feature>
<feature type="helix" evidence="15">
    <location>
        <begin position="388"/>
        <end position="398"/>
    </location>
</feature>
<feature type="helix" evidence="13">
    <location>
        <begin position="402"/>
        <end position="404"/>
    </location>
</feature>
<feature type="strand" evidence="15">
    <location>
        <begin position="409"/>
        <end position="411"/>
    </location>
</feature>
<feature type="helix" evidence="15">
    <location>
        <begin position="417"/>
        <end position="423"/>
    </location>
</feature>
<feature type="strand" evidence="15">
    <location>
        <begin position="426"/>
        <end position="429"/>
    </location>
</feature>
<feature type="turn" evidence="15">
    <location>
        <begin position="438"/>
        <end position="441"/>
    </location>
</feature>
<feature type="helix" evidence="15">
    <location>
        <begin position="445"/>
        <end position="447"/>
    </location>
</feature>
<feature type="turn" evidence="15">
    <location>
        <begin position="448"/>
        <end position="450"/>
    </location>
</feature>
<feature type="turn" evidence="15">
    <location>
        <begin position="460"/>
        <end position="464"/>
    </location>
</feature>
<feature type="strand" evidence="15">
    <location>
        <begin position="465"/>
        <end position="468"/>
    </location>
</feature>
<feature type="helix" evidence="15">
    <location>
        <begin position="480"/>
        <end position="489"/>
    </location>
</feature>
<feature type="helix" evidence="15">
    <location>
        <begin position="495"/>
        <end position="503"/>
    </location>
</feature>
<feature type="turn" evidence="13">
    <location>
        <begin position="504"/>
        <end position="506"/>
    </location>
</feature>
<feature type="helix" evidence="15">
    <location>
        <begin position="509"/>
        <end position="512"/>
    </location>
</feature>
<feature type="strand" evidence="15">
    <location>
        <begin position="515"/>
        <end position="520"/>
    </location>
</feature>
<feature type="strand" evidence="15">
    <location>
        <begin position="523"/>
        <end position="529"/>
    </location>
</feature>
<feature type="helix" evidence="15">
    <location>
        <begin position="531"/>
        <end position="543"/>
    </location>
</feature>
<feature type="strand" evidence="15">
    <location>
        <begin position="552"/>
        <end position="557"/>
    </location>
</feature>
<feature type="strand" evidence="15">
    <location>
        <begin position="562"/>
        <end position="567"/>
    </location>
</feature>
<feature type="strand" evidence="15">
    <location>
        <begin position="573"/>
        <end position="581"/>
    </location>
</feature>
<feature type="strand" evidence="15">
    <location>
        <begin position="584"/>
        <end position="586"/>
    </location>
</feature>
<feature type="helix" evidence="15">
    <location>
        <begin position="589"/>
        <end position="596"/>
    </location>
</feature>
<feature type="helix" evidence="15">
    <location>
        <begin position="602"/>
        <end position="607"/>
    </location>
</feature>
<feature type="strand" evidence="15">
    <location>
        <begin position="610"/>
        <end position="614"/>
    </location>
</feature>
<feature type="helix" evidence="15">
    <location>
        <begin position="618"/>
        <end position="621"/>
    </location>
</feature>
<feature type="strand" evidence="15">
    <location>
        <begin position="624"/>
        <end position="627"/>
    </location>
</feature>
<feature type="helix" evidence="15">
    <location>
        <begin position="628"/>
        <end position="630"/>
    </location>
</feature>
<feature type="strand" evidence="14">
    <location>
        <begin position="637"/>
        <end position="640"/>
    </location>
</feature>
<feature type="helix" evidence="15">
    <location>
        <begin position="642"/>
        <end position="645"/>
    </location>
</feature>
<feature type="helix" evidence="15">
    <location>
        <begin position="650"/>
        <end position="652"/>
    </location>
</feature>
<feature type="strand" evidence="14">
    <location>
        <begin position="653"/>
        <end position="655"/>
    </location>
</feature>
<feature type="helix" evidence="15">
    <location>
        <begin position="656"/>
        <end position="658"/>
    </location>
</feature>
<feature type="helix" evidence="15">
    <location>
        <begin position="661"/>
        <end position="670"/>
    </location>
</feature>
<feature type="strand" evidence="14">
    <location>
        <begin position="672"/>
        <end position="674"/>
    </location>
</feature>
<feature type="helix" evidence="15">
    <location>
        <begin position="682"/>
        <end position="684"/>
    </location>
</feature>
<feature type="strand" evidence="15">
    <location>
        <begin position="688"/>
        <end position="695"/>
    </location>
</feature>
<feature type="strand" evidence="15">
    <location>
        <begin position="700"/>
        <end position="702"/>
    </location>
</feature>
<feature type="helix" evidence="15">
    <location>
        <begin position="704"/>
        <end position="708"/>
    </location>
</feature>
<feature type="turn" evidence="15">
    <location>
        <begin position="709"/>
        <end position="713"/>
    </location>
</feature>
<feature type="strand" evidence="15">
    <location>
        <begin position="718"/>
        <end position="725"/>
    </location>
</feature>
<feature type="turn" evidence="15">
    <location>
        <begin position="728"/>
        <end position="731"/>
    </location>
</feature>
<feature type="strand" evidence="15">
    <location>
        <begin position="733"/>
        <end position="739"/>
    </location>
</feature>
<feature type="helix" evidence="15">
    <location>
        <begin position="740"/>
        <end position="744"/>
    </location>
</feature>
<feature type="turn" evidence="15">
    <location>
        <begin position="745"/>
        <end position="748"/>
    </location>
</feature>
<feature type="strand" evidence="15">
    <location>
        <begin position="750"/>
        <end position="757"/>
    </location>
</feature>
<feature type="helix" evidence="15">
    <location>
        <begin position="765"/>
        <end position="767"/>
    </location>
</feature>
<feature type="strand" evidence="15">
    <location>
        <begin position="771"/>
        <end position="773"/>
    </location>
</feature>
<feature type="helix" evidence="15">
    <location>
        <begin position="784"/>
        <end position="786"/>
    </location>
</feature>
<feature type="strand" evidence="13">
    <location>
        <begin position="794"/>
        <end position="796"/>
    </location>
</feature>
<feature type="strand" evidence="15">
    <location>
        <begin position="807"/>
        <end position="809"/>
    </location>
</feature>
<feature type="strand" evidence="15">
    <location>
        <begin position="811"/>
        <end position="813"/>
    </location>
</feature>
<feature type="strand" evidence="15">
    <location>
        <begin position="843"/>
        <end position="852"/>
    </location>
</feature>
<feature type="strand" evidence="15">
    <location>
        <begin position="854"/>
        <end position="856"/>
    </location>
</feature>
<feature type="strand" evidence="15">
    <location>
        <begin position="858"/>
        <end position="868"/>
    </location>
</feature>
<feature type="strand" evidence="15">
    <location>
        <begin position="875"/>
        <end position="878"/>
    </location>
</feature>
<feature type="strand" evidence="15">
    <location>
        <begin position="883"/>
        <end position="890"/>
    </location>
</feature>
<feature type="turn" evidence="15">
    <location>
        <begin position="892"/>
        <end position="894"/>
    </location>
</feature>
<feature type="strand" evidence="15">
    <location>
        <begin position="905"/>
        <end position="908"/>
    </location>
</feature>
<feature type="helix" evidence="15">
    <location>
        <begin position="910"/>
        <end position="912"/>
    </location>
</feature>
<feature type="turn" evidence="15">
    <location>
        <begin position="914"/>
        <end position="916"/>
    </location>
</feature>
<feature type="helix" evidence="15">
    <location>
        <begin position="919"/>
        <end position="934"/>
    </location>
</feature>
<feature type="helix" evidence="15">
    <location>
        <begin position="949"/>
        <end position="958"/>
    </location>
</feature>
<feature type="strand" evidence="13">
    <location>
        <begin position="965"/>
        <end position="970"/>
    </location>
</feature>
<feature type="turn" evidence="15">
    <location>
        <begin position="972"/>
        <end position="974"/>
    </location>
</feature>
<feature type="strand" evidence="15">
    <location>
        <begin position="982"/>
        <end position="993"/>
    </location>
</feature>
<feature type="helix" evidence="15">
    <location>
        <begin position="996"/>
        <end position="998"/>
    </location>
</feature>
<feature type="strand" evidence="15">
    <location>
        <begin position="1001"/>
        <end position="1005"/>
    </location>
</feature>
<feature type="turn" evidence="15">
    <location>
        <begin position="1010"/>
        <end position="1012"/>
    </location>
</feature>
<feature type="strand" evidence="15">
    <location>
        <begin position="1018"/>
        <end position="1022"/>
    </location>
</feature>
<feature type="strand" evidence="15">
    <location>
        <begin position="1025"/>
        <end position="1027"/>
    </location>
</feature>
<feature type="helix" evidence="15">
    <location>
        <begin position="1029"/>
        <end position="1038"/>
    </location>
</feature>
<feature type="helix" evidence="15">
    <location>
        <begin position="1041"/>
        <end position="1048"/>
    </location>
</feature>
<feature type="turn" evidence="15">
    <location>
        <begin position="1049"/>
        <end position="1052"/>
    </location>
</feature>
<feature type="strand" evidence="15">
    <location>
        <begin position="1054"/>
        <end position="1060"/>
    </location>
</feature>
<feature type="turn" evidence="15">
    <location>
        <begin position="1061"/>
        <end position="1063"/>
    </location>
</feature>
<feature type="strand" evidence="13">
    <location>
        <begin position="1068"/>
        <end position="1070"/>
    </location>
</feature>
<feature type="strand" evidence="15">
    <location>
        <begin position="1071"/>
        <end position="1073"/>
    </location>
</feature>
<feature type="strand" evidence="15">
    <location>
        <begin position="1076"/>
        <end position="1078"/>
    </location>
</feature>
<feature type="turn" evidence="15">
    <location>
        <begin position="1079"/>
        <end position="1081"/>
    </location>
</feature>
<feature type="strand" evidence="15">
    <location>
        <begin position="1087"/>
        <end position="1093"/>
    </location>
</feature>
<feature type="helix" evidence="15">
    <location>
        <begin position="1094"/>
        <end position="1105"/>
    </location>
</feature>
<feature type="strand" evidence="15">
    <location>
        <begin position="1111"/>
        <end position="1118"/>
    </location>
</feature>
<dbReference type="EC" id="2.7.7.6" evidence="4"/>
<dbReference type="EMBL" id="X14818">
    <property type="protein sequence ID" value="CAA32924.1"/>
    <property type="molecule type" value="Genomic_DNA"/>
</dbReference>
<dbReference type="EMBL" id="CP000077">
    <property type="protein sequence ID" value="AAY80073.1"/>
    <property type="molecule type" value="Genomic_DNA"/>
</dbReference>
<dbReference type="PIR" id="S04716">
    <property type="entry name" value="S04716"/>
</dbReference>
<dbReference type="RefSeq" id="WP_011277575.1">
    <property type="nucleotide sequence ID" value="NC_007181.1"/>
</dbReference>
<dbReference type="PDB" id="7OK0">
    <property type="method" value="EM"/>
    <property type="resolution" value="2.90 A"/>
    <property type="chains" value="B=1-1126"/>
</dbReference>
<dbReference type="PDB" id="7OQ4">
    <property type="method" value="EM"/>
    <property type="resolution" value="3.27 A"/>
    <property type="chains" value="B=1-1126"/>
</dbReference>
<dbReference type="PDB" id="7OQY">
    <property type="method" value="EM"/>
    <property type="resolution" value="2.61 A"/>
    <property type="chains" value="B=1-1126"/>
</dbReference>
<dbReference type="PDBsum" id="7OK0"/>
<dbReference type="PDBsum" id="7OQ4"/>
<dbReference type="PDBsum" id="7OQY"/>
<dbReference type="EMDB" id="EMD-12960"/>
<dbReference type="EMDB" id="EMD-13026"/>
<dbReference type="EMDB" id="EMD-13034"/>
<dbReference type="SMR" id="P11513"/>
<dbReference type="STRING" id="330779.Saci_0693"/>
<dbReference type="GeneID" id="14551208"/>
<dbReference type="KEGG" id="sai:Saci_0693"/>
<dbReference type="PATRIC" id="fig|330779.12.peg.661"/>
<dbReference type="eggNOG" id="arCOG01762">
    <property type="taxonomic scope" value="Archaea"/>
</dbReference>
<dbReference type="HOGENOM" id="CLU_000524_5_1_2"/>
<dbReference type="Proteomes" id="UP000001018">
    <property type="component" value="Chromosome"/>
</dbReference>
<dbReference type="GO" id="GO:0005737">
    <property type="term" value="C:cytoplasm"/>
    <property type="evidence" value="ECO:0007669"/>
    <property type="project" value="UniProtKB-SubCell"/>
</dbReference>
<dbReference type="GO" id="GO:0000428">
    <property type="term" value="C:DNA-directed RNA polymerase complex"/>
    <property type="evidence" value="ECO:0000314"/>
    <property type="project" value="UniProtKB"/>
</dbReference>
<dbReference type="GO" id="GO:0003677">
    <property type="term" value="F:DNA binding"/>
    <property type="evidence" value="ECO:0007669"/>
    <property type="project" value="UniProtKB-KW"/>
</dbReference>
<dbReference type="GO" id="GO:0003899">
    <property type="term" value="F:DNA-directed RNA polymerase activity"/>
    <property type="evidence" value="ECO:0000314"/>
    <property type="project" value="UniProtKB"/>
</dbReference>
<dbReference type="GO" id="GO:0032549">
    <property type="term" value="F:ribonucleoside binding"/>
    <property type="evidence" value="ECO:0007669"/>
    <property type="project" value="InterPro"/>
</dbReference>
<dbReference type="GO" id="GO:0008270">
    <property type="term" value="F:zinc ion binding"/>
    <property type="evidence" value="ECO:0007669"/>
    <property type="project" value="InterPro"/>
</dbReference>
<dbReference type="GO" id="GO:0006351">
    <property type="term" value="P:DNA-templated transcription"/>
    <property type="evidence" value="ECO:0000314"/>
    <property type="project" value="UniProtKB"/>
</dbReference>
<dbReference type="CDD" id="cd00653">
    <property type="entry name" value="RNA_pol_B_RPB2"/>
    <property type="match status" value="1"/>
</dbReference>
<dbReference type="FunFam" id="2.40.270.10:FF:000006">
    <property type="entry name" value="DNA-directed RNA polymerase subunit beta"/>
    <property type="match status" value="1"/>
</dbReference>
<dbReference type="FunFam" id="3.90.1800.10:FF:000002">
    <property type="entry name" value="DNA-directed RNA polymerase subunit beta"/>
    <property type="match status" value="1"/>
</dbReference>
<dbReference type="Gene3D" id="2.40.50.150">
    <property type="match status" value="1"/>
</dbReference>
<dbReference type="Gene3D" id="3.90.1070.20">
    <property type="match status" value="1"/>
</dbReference>
<dbReference type="Gene3D" id="3.90.1100.10">
    <property type="match status" value="1"/>
</dbReference>
<dbReference type="Gene3D" id="2.40.270.10">
    <property type="entry name" value="DNA-directed RNA polymerase, subunit 2, domain 6"/>
    <property type="match status" value="1"/>
</dbReference>
<dbReference type="Gene3D" id="3.90.1800.10">
    <property type="entry name" value="RNA polymerase alpha subunit dimerisation domain"/>
    <property type="match status" value="1"/>
</dbReference>
<dbReference type="Gene3D" id="3.90.1110.10">
    <property type="entry name" value="RNA polymerase Rpb2, domain 2"/>
    <property type="match status" value="1"/>
</dbReference>
<dbReference type="InterPro" id="IPR015712">
    <property type="entry name" value="DNA-dir_RNA_pol_su2"/>
</dbReference>
<dbReference type="InterPro" id="IPR007120">
    <property type="entry name" value="DNA-dir_RNAP_su2_dom"/>
</dbReference>
<dbReference type="InterPro" id="IPR037033">
    <property type="entry name" value="DNA-dir_RNAP_su2_hyb_sf"/>
</dbReference>
<dbReference type="InterPro" id="IPR007121">
    <property type="entry name" value="RNA_pol_bsu_CS"/>
</dbReference>
<dbReference type="InterPro" id="IPR007644">
    <property type="entry name" value="RNA_pol_bsu_protrusion"/>
</dbReference>
<dbReference type="InterPro" id="IPR007642">
    <property type="entry name" value="RNA_pol_Rpb2_2"/>
</dbReference>
<dbReference type="InterPro" id="IPR037034">
    <property type="entry name" value="RNA_pol_Rpb2_2_sf"/>
</dbReference>
<dbReference type="InterPro" id="IPR007645">
    <property type="entry name" value="RNA_pol_Rpb2_3"/>
</dbReference>
<dbReference type="InterPro" id="IPR007646">
    <property type="entry name" value="RNA_pol_Rpb2_4"/>
</dbReference>
<dbReference type="InterPro" id="IPR007647">
    <property type="entry name" value="RNA_pol_Rpb2_5"/>
</dbReference>
<dbReference type="InterPro" id="IPR007641">
    <property type="entry name" value="RNA_pol_Rpb2_7"/>
</dbReference>
<dbReference type="InterPro" id="IPR014724">
    <property type="entry name" value="RNA_pol_RPB2_OB-fold"/>
</dbReference>
<dbReference type="InterPro" id="IPR019969">
    <property type="entry name" value="RNAP_Rpo2"/>
</dbReference>
<dbReference type="NCBIfam" id="NF006335">
    <property type="entry name" value="PRK08565.1"/>
    <property type="match status" value="1"/>
</dbReference>
<dbReference type="NCBIfam" id="NF007175">
    <property type="entry name" value="PRK09606.1"/>
    <property type="match status" value="1"/>
</dbReference>
<dbReference type="NCBIfam" id="TIGR03670">
    <property type="entry name" value="rpoB_arch"/>
    <property type="match status" value="1"/>
</dbReference>
<dbReference type="PANTHER" id="PTHR20856">
    <property type="entry name" value="DNA-DIRECTED RNA POLYMERASE I SUBUNIT 2"/>
    <property type="match status" value="1"/>
</dbReference>
<dbReference type="Pfam" id="PF04563">
    <property type="entry name" value="RNA_pol_Rpb2_1"/>
    <property type="match status" value="1"/>
</dbReference>
<dbReference type="Pfam" id="PF04561">
    <property type="entry name" value="RNA_pol_Rpb2_2"/>
    <property type="match status" value="1"/>
</dbReference>
<dbReference type="Pfam" id="PF04565">
    <property type="entry name" value="RNA_pol_Rpb2_3"/>
    <property type="match status" value="1"/>
</dbReference>
<dbReference type="Pfam" id="PF04566">
    <property type="entry name" value="RNA_pol_Rpb2_4"/>
    <property type="match status" value="1"/>
</dbReference>
<dbReference type="Pfam" id="PF04567">
    <property type="entry name" value="RNA_pol_Rpb2_5"/>
    <property type="match status" value="1"/>
</dbReference>
<dbReference type="Pfam" id="PF00562">
    <property type="entry name" value="RNA_pol_Rpb2_6"/>
    <property type="match status" value="1"/>
</dbReference>
<dbReference type="Pfam" id="PF04560">
    <property type="entry name" value="RNA_pol_Rpb2_7"/>
    <property type="match status" value="1"/>
</dbReference>
<dbReference type="SUPFAM" id="SSF64484">
    <property type="entry name" value="beta and beta-prime subunits of DNA dependent RNA-polymerase"/>
    <property type="match status" value="1"/>
</dbReference>
<dbReference type="PROSITE" id="PS01166">
    <property type="entry name" value="RNA_POL_BETA"/>
    <property type="match status" value="1"/>
</dbReference>
<sequence>MLDTESRWAIAESFFKTRGLVRQHLDSFNDFLRNKLQQVIYEQGEIVTEVPGLKIKLGKIRYEKPSIRETDKGPMREITPMEARLRNLTYSSPIFLSMIPVENNIEGEPIEIYIGDLPIMLKSVADPTSNLPIDKLIEIGEDPKDPGGYFIVNGSEKVIIAQEDLATNRVLVDYGKSGSNITHVAKVTSSAAGYRVQVMIERLKDSTIQISFATVPGRIPFAIIMRALGFVTDRDIVYAVSLDPQIQNELLPSLEQASSITSAEEALDFIGNRVAIGQKRENRIQKAEQVIDKYFLPHLGTSPEDRKKKGYYLASAVNKILELYLGRREPDDKDHYANKRVRLAGDLFTSLFRVAFKAFVKDLVYQLEKSKVRGRRLSLTALVRADIITERIRHALATGNWVGGRTGVSQLLDRTNWLSMLSHLRRVVSSLARGQPNFEARDLHGTQWGRMCPFETPEGPNSGLVKNLALLAQVSVGINESVVERVAYELGVVSVEDVIRRISEQNEDVEKYMSWSKVYLNGRLLGYYEDGKELAKKIRESRRQGKLSDEVNVAYIATDYLNEVHINCDAGRVRRPLIIVNNGTPLVDTEDIKKLKNGEITFDDLVKQGKIEFIDAEEEENAYVALNPQDLTPDHTHLEIWPSAILGIIASIIPYPEHNQSPRNTYQSAMAKQSLGLYASNYQIRTDTRAHLLHYPQMPLVQTRMLGVIGYNDRPAGANAILAIMSYTGYNMEDSIIMNKSSIERGMYRSTFFRLYSTEEVKYPGGQEDKIVTPEAGVKGYKGKDYYRLLEDNGVVSPEVEVKGGDVLIGKVSPPRFLQEFKELSPEQAKRDTSIVTRHGENGIVDLVLITETLEGNKLVKVRVRDLRIPEIGDKFATRHGQKGVVGILIDQVDMPYTAKGIVPDIILNPHALPSRMTIGQIMEAIGGKYAALSGKPVDATPFLETPKLQEMQKEILKLGHLPDSTEVVYDGRTGQKLKSRILFGIVYYQKLHHMVADKMHARARGPVQILTRQPTEGRAREGGLRFGEMERDCLIGFGTAMLIKDRLLDNSDKAVVYICDQCGYVGWYDRSKNRYVCPVHGDKSVLHPVTVSYAFKLLIQELMSMVISPRLILGEKVNLGGASNE</sequence>
<name>RPO2_SULAC</name>
<reference key="1">
    <citation type="journal article" date="1989" name="Nucleic Acids Res.">
        <title>Organization and nucleotide sequence of the genes encoding the large subunits A, B and C of the DNA-dependent RNA polymerase of the archaebacterium Sulfolobus acidocaldarius.</title>
        <authorList>
            <person name="Puehler G."/>
            <person name="Lottspeich F."/>
            <person name="Zillig W."/>
        </authorList>
    </citation>
    <scope>NUCLEOTIDE SEQUENCE [GENOMIC DNA]</scope>
    <source>
        <strain>ATCC 33909 / DSM 639 / JCM 8929 / NBRC 15157 / NCIMB 11770</strain>
    </source>
</reference>
<reference key="2">
    <citation type="journal article" date="2005" name="J. Bacteriol.">
        <title>The genome of Sulfolobus acidocaldarius, a model organism of the Crenarchaeota.</title>
        <authorList>
            <person name="Chen L."/>
            <person name="Bruegger K."/>
            <person name="Skovgaard M."/>
            <person name="Redder P."/>
            <person name="She Q."/>
            <person name="Torarinsson E."/>
            <person name="Greve B."/>
            <person name="Awayez M."/>
            <person name="Zibat A."/>
            <person name="Klenk H.-P."/>
            <person name="Garrett R.A."/>
        </authorList>
    </citation>
    <scope>NUCLEOTIDE SEQUENCE [LARGE SCALE GENOMIC DNA]</scope>
    <source>
        <strain>ATCC 33909 / DSM 639 / JCM 8929 / NBRC 15157 / NCIMB 11770</strain>
    </source>
</reference>
<reference key="3">
    <citation type="journal article" date="1992" name="Proc. Natl. Acad. Sci. U.S.A.">
        <title>Component H of the DNA-dependent RNA polymerases of Archaea is homologous to a subunit shared by the three eucaryal nuclear RNA polymerases.</title>
        <authorList>
            <person name="Klenk H.-P."/>
            <person name="Palm P."/>
            <person name="Lottspeich F."/>
            <person name="Zillig W."/>
        </authorList>
    </citation>
    <scope>SUBUNIT</scope>
    <source>
        <strain>ATCC 33909 / DSM 639 / JCM 8929 / NBRC 15157 / NCIMB 11770</strain>
    </source>
</reference>
<reference key="4">
    <citation type="journal article" date="1994" name="Syst. Appl. Microbiol.">
        <title>Structure and Function of the DNA-Dependent RNA Polymerase of Sulfolobus.</title>
        <authorList>
            <person name="Lanzendorfer M."/>
            <person name="Langer D."/>
            <person name="Hain J."/>
            <person name="Klenk H.-P."/>
            <person name="Holz I."/>
            <person name="Arnold-Ammer I."/>
            <person name="Zillig W."/>
        </authorList>
    </citation>
    <scope>FUNCTION</scope>
    <scope>CATALYTIC ACTIVITY</scope>
    <scope>COFACTOR</scope>
    <scope>SUBUNIT</scope>
    <source>
        <strain>ATCC 33909 / DSM 639 / JCM 8929 / NBRC 15157 / NCIMB 11770</strain>
    </source>
</reference>
<reference evidence="10 11 12" key="5">
    <citation type="journal article" date="2021" name="Nat. Commun.">
        <title>Structural basis of RNA polymerase inhibition by viral and host factors.</title>
        <authorList>
            <person name="Pilotto S."/>
            <person name="Fouqueau T."/>
            <person name="Lukoyanova N."/>
            <person name="Sheppard C."/>
            <person name="Lucas-Staat S."/>
            <person name="Diaz-Santin L.M."/>
            <person name="Matelska D."/>
            <person name="Prangishvili D."/>
            <person name="Cheung A.C.M."/>
            <person name="Werner F."/>
        </authorList>
    </citation>
    <scope>STRUCTURE BY ELECTRON MICROSCOPY (2.61 ANGSTROMS) OF RNAP WITH AND WITHOUT INHIBITORS</scope>
    <scope>COFACTOR</scope>
    <scope>INTERACTION WITH TFS4</scope>
    <scope>INTERACTION WITH VIRAL RIP (MICROBIAL INFECTION)</scope>
    <scope>SUBUNIT</scope>
    <source>
        <strain>ATCC 33909 / DSM 639 / JCM 8929 / NBRC 15157 / NCIMB 11770</strain>
    </source>
</reference>
<accession>P11513</accession>
<accession>Q4JAV6</accession>
<comment type="function">
    <text evidence="1 4">DNA-dependent RNA polymerase (RNAP) catalyzes the transcription of DNA into RNA using the four ribonucleoside triphosphates as substrates (Ref.4). This subunit is involved in DNA promoter recognition (By similarity).</text>
</comment>
<comment type="catalytic activity">
    <reaction evidence="4">
        <text>RNA(n) + a ribonucleoside 5'-triphosphate = RNA(n+1) + diphosphate</text>
        <dbReference type="Rhea" id="RHEA:21248"/>
        <dbReference type="Rhea" id="RHEA-COMP:14527"/>
        <dbReference type="Rhea" id="RHEA-COMP:17342"/>
        <dbReference type="ChEBI" id="CHEBI:33019"/>
        <dbReference type="ChEBI" id="CHEBI:61557"/>
        <dbReference type="ChEBI" id="CHEBI:140395"/>
        <dbReference type="EC" id="2.7.7.6"/>
    </reaction>
</comment>
<comment type="cofactor">
    <cofactor evidence="3 9 10 11 12">
        <name>Zn(2+)</name>
        <dbReference type="ChEBI" id="CHEBI:29105"/>
    </cofactor>
    <text evidence="3 9 10 11 12">Binds 1 Zn(2+) per subunit.</text>
</comment>
<comment type="subunit">
    <text evidence="2 3 4 10 11 12">Part of the 13-subunit RNA polymerase complex (PubMed:34535646). Interacts with TFS4 (PubMed:34535646).</text>
</comment>
<comment type="subunit">
    <text evidence="3">(Microbial infection) Binds viral protein RIP which blocks global transcription.</text>
</comment>
<comment type="subcellular location">
    <subcellularLocation>
        <location evidence="1">Cytoplasm</location>
    </subcellularLocation>
</comment>
<comment type="similarity">
    <text evidence="8">Belongs to the RNA polymerase beta chain family.</text>
</comment>
<keyword id="KW-0002">3D-structure</keyword>
<keyword id="KW-0963">Cytoplasm</keyword>
<keyword id="KW-0238">DNA-binding</keyword>
<keyword id="KW-0240">DNA-directed RNA polymerase</keyword>
<keyword id="KW-0479">Metal-binding</keyword>
<keyword id="KW-0548">Nucleotidyltransferase</keyword>
<keyword id="KW-1185">Reference proteome</keyword>
<keyword id="KW-0804">Transcription</keyword>
<keyword id="KW-0808">Transferase</keyword>
<keyword id="KW-0862">Zinc</keyword>